<accession>Q54ZN3</accession>
<accession>Q8MN47</accession>
<comment type="catalytic activity">
    <reaction>
        <text>L-seryl-[protein] + ATP = O-phospho-L-seryl-[protein] + ADP + H(+)</text>
        <dbReference type="Rhea" id="RHEA:17989"/>
        <dbReference type="Rhea" id="RHEA-COMP:9863"/>
        <dbReference type="Rhea" id="RHEA-COMP:11604"/>
        <dbReference type="ChEBI" id="CHEBI:15378"/>
        <dbReference type="ChEBI" id="CHEBI:29999"/>
        <dbReference type="ChEBI" id="CHEBI:30616"/>
        <dbReference type="ChEBI" id="CHEBI:83421"/>
        <dbReference type="ChEBI" id="CHEBI:456216"/>
        <dbReference type="EC" id="2.7.11.1"/>
    </reaction>
</comment>
<comment type="catalytic activity">
    <reaction>
        <text>L-threonyl-[protein] + ATP = O-phospho-L-threonyl-[protein] + ADP + H(+)</text>
        <dbReference type="Rhea" id="RHEA:46608"/>
        <dbReference type="Rhea" id="RHEA-COMP:11060"/>
        <dbReference type="Rhea" id="RHEA-COMP:11605"/>
        <dbReference type="ChEBI" id="CHEBI:15378"/>
        <dbReference type="ChEBI" id="CHEBI:30013"/>
        <dbReference type="ChEBI" id="CHEBI:30616"/>
        <dbReference type="ChEBI" id="CHEBI:61977"/>
        <dbReference type="ChEBI" id="CHEBI:456216"/>
        <dbReference type="EC" id="2.7.11.1"/>
    </reaction>
</comment>
<comment type="similarity">
    <text evidence="2">Belongs to the protein kinase superfamily. Ser/Thr protein kinase family. WEE1 subfamily.</text>
</comment>
<reference key="1">
    <citation type="journal article" date="2002" name="Nature">
        <title>Sequence and analysis of chromosome 2 of Dictyostelium discoideum.</title>
        <authorList>
            <person name="Gloeckner G."/>
            <person name="Eichinger L."/>
            <person name="Szafranski K."/>
            <person name="Pachebat J.A."/>
            <person name="Bankier A.T."/>
            <person name="Dear P.H."/>
            <person name="Lehmann R."/>
            <person name="Baumgart C."/>
            <person name="Parra G."/>
            <person name="Abril J.F."/>
            <person name="Guigo R."/>
            <person name="Kumpf K."/>
            <person name="Tunggal B."/>
            <person name="Cox E.C."/>
            <person name="Quail M.A."/>
            <person name="Platzer M."/>
            <person name="Rosenthal A."/>
            <person name="Noegel A.A."/>
        </authorList>
    </citation>
    <scope>NUCLEOTIDE SEQUENCE [LARGE SCALE GENOMIC DNA]</scope>
    <source>
        <strain>AX4</strain>
    </source>
</reference>
<reference key="2">
    <citation type="journal article" date="2005" name="Nature">
        <title>The genome of the social amoeba Dictyostelium discoideum.</title>
        <authorList>
            <person name="Eichinger L."/>
            <person name="Pachebat J.A."/>
            <person name="Gloeckner G."/>
            <person name="Rajandream M.A."/>
            <person name="Sucgang R."/>
            <person name="Berriman M."/>
            <person name="Song J."/>
            <person name="Olsen R."/>
            <person name="Szafranski K."/>
            <person name="Xu Q."/>
            <person name="Tunggal B."/>
            <person name="Kummerfeld S."/>
            <person name="Madera M."/>
            <person name="Konfortov B.A."/>
            <person name="Rivero F."/>
            <person name="Bankier A.T."/>
            <person name="Lehmann R."/>
            <person name="Hamlin N."/>
            <person name="Davies R."/>
            <person name="Gaudet P."/>
            <person name="Fey P."/>
            <person name="Pilcher K."/>
            <person name="Chen G."/>
            <person name="Saunders D."/>
            <person name="Sodergren E.J."/>
            <person name="Davis P."/>
            <person name="Kerhornou A."/>
            <person name="Nie X."/>
            <person name="Hall N."/>
            <person name="Anjard C."/>
            <person name="Hemphill L."/>
            <person name="Bason N."/>
            <person name="Farbrother P."/>
            <person name="Desany B."/>
            <person name="Just E."/>
            <person name="Morio T."/>
            <person name="Rost R."/>
            <person name="Churcher C.M."/>
            <person name="Cooper J."/>
            <person name="Haydock S."/>
            <person name="van Driessche N."/>
            <person name="Cronin A."/>
            <person name="Goodhead I."/>
            <person name="Muzny D.M."/>
            <person name="Mourier T."/>
            <person name="Pain A."/>
            <person name="Lu M."/>
            <person name="Harper D."/>
            <person name="Lindsay R."/>
            <person name="Hauser H."/>
            <person name="James K.D."/>
            <person name="Quiles M."/>
            <person name="Madan Babu M."/>
            <person name="Saito T."/>
            <person name="Buchrieser C."/>
            <person name="Wardroper A."/>
            <person name="Felder M."/>
            <person name="Thangavelu M."/>
            <person name="Johnson D."/>
            <person name="Knights A."/>
            <person name="Loulseged H."/>
            <person name="Mungall K.L."/>
            <person name="Oliver K."/>
            <person name="Price C."/>
            <person name="Quail M.A."/>
            <person name="Urushihara H."/>
            <person name="Hernandez J."/>
            <person name="Rabbinowitsch E."/>
            <person name="Steffen D."/>
            <person name="Sanders M."/>
            <person name="Ma J."/>
            <person name="Kohara Y."/>
            <person name="Sharp S."/>
            <person name="Simmonds M.N."/>
            <person name="Spiegler S."/>
            <person name="Tivey A."/>
            <person name="Sugano S."/>
            <person name="White B."/>
            <person name="Walker D."/>
            <person name="Woodward J.R."/>
            <person name="Winckler T."/>
            <person name="Tanaka Y."/>
            <person name="Shaulsky G."/>
            <person name="Schleicher M."/>
            <person name="Weinstock G.M."/>
            <person name="Rosenthal A."/>
            <person name="Cox E.C."/>
            <person name="Chisholm R.L."/>
            <person name="Gibbs R.A."/>
            <person name="Loomis W.F."/>
            <person name="Platzer M."/>
            <person name="Kay R.R."/>
            <person name="Williams J.G."/>
            <person name="Dear P.H."/>
            <person name="Noegel A.A."/>
            <person name="Barrell B.G."/>
            <person name="Kuspa A."/>
        </authorList>
    </citation>
    <scope>NUCLEOTIDE SEQUENCE [LARGE SCALE GENOMIC DNA]</scope>
    <source>
        <strain>AX4</strain>
    </source>
</reference>
<keyword id="KW-0067">ATP-binding</keyword>
<keyword id="KW-0418">Kinase</keyword>
<keyword id="KW-0460">Magnesium</keyword>
<keyword id="KW-0479">Metal-binding</keyword>
<keyword id="KW-0547">Nucleotide-binding</keyword>
<keyword id="KW-1185">Reference proteome</keyword>
<keyword id="KW-0723">Serine/threonine-protein kinase</keyword>
<keyword id="KW-0808">Transferase</keyword>
<protein>
    <recommendedName>
        <fullName>Probable protein kinase DDB_G0277539</fullName>
        <ecNumber>2.7.11.1</ecNumber>
    </recommendedName>
</protein>
<dbReference type="EC" id="2.7.11.1"/>
<dbReference type="EMBL" id="AAFI02000020">
    <property type="protein sequence ID" value="EAL68732.1"/>
    <property type="molecule type" value="Genomic_DNA"/>
</dbReference>
<dbReference type="RefSeq" id="XP_642609.1">
    <property type="nucleotide sequence ID" value="XM_637517.1"/>
</dbReference>
<dbReference type="SMR" id="Q54ZN3"/>
<dbReference type="FunCoup" id="Q54ZN3">
    <property type="interactions" value="446"/>
</dbReference>
<dbReference type="STRING" id="44689.Q54ZN3"/>
<dbReference type="GlyGen" id="Q54ZN3">
    <property type="glycosylation" value="2 sites"/>
</dbReference>
<dbReference type="PaxDb" id="44689-DDB0220004"/>
<dbReference type="EnsemblProtists" id="EAL68732">
    <property type="protein sequence ID" value="EAL68732"/>
    <property type="gene ID" value="DDB_G0277539"/>
</dbReference>
<dbReference type="GeneID" id="8621026"/>
<dbReference type="KEGG" id="ddi:DDB_G0277539"/>
<dbReference type="dictyBase" id="DDB_G0277539"/>
<dbReference type="VEuPathDB" id="AmoebaDB:DDB_G0277539"/>
<dbReference type="eggNOG" id="KOG0601">
    <property type="taxonomic scope" value="Eukaryota"/>
</dbReference>
<dbReference type="HOGENOM" id="CLU_300254_0_0_1"/>
<dbReference type="InParanoid" id="Q54ZN3"/>
<dbReference type="OMA" id="YELARCK"/>
<dbReference type="Reactome" id="R-DDI-156711">
    <property type="pathway name" value="Polo-like kinase mediated events"/>
</dbReference>
<dbReference type="PRO" id="PR:Q54ZN3"/>
<dbReference type="Proteomes" id="UP000002195">
    <property type="component" value="Chromosome 2"/>
</dbReference>
<dbReference type="GO" id="GO:0005737">
    <property type="term" value="C:cytoplasm"/>
    <property type="evidence" value="ECO:0000318"/>
    <property type="project" value="GO_Central"/>
</dbReference>
<dbReference type="GO" id="GO:0005634">
    <property type="term" value="C:nucleus"/>
    <property type="evidence" value="ECO:0000318"/>
    <property type="project" value="GO_Central"/>
</dbReference>
<dbReference type="GO" id="GO:0005524">
    <property type="term" value="F:ATP binding"/>
    <property type="evidence" value="ECO:0007669"/>
    <property type="project" value="UniProtKB-KW"/>
</dbReference>
<dbReference type="GO" id="GO:0046872">
    <property type="term" value="F:metal ion binding"/>
    <property type="evidence" value="ECO:0007669"/>
    <property type="project" value="UniProtKB-KW"/>
</dbReference>
<dbReference type="GO" id="GO:0106310">
    <property type="term" value="F:protein serine kinase activity"/>
    <property type="evidence" value="ECO:0007669"/>
    <property type="project" value="RHEA"/>
</dbReference>
<dbReference type="GO" id="GO:0004674">
    <property type="term" value="F:protein serine/threonine kinase activity"/>
    <property type="evidence" value="ECO:0007669"/>
    <property type="project" value="UniProtKB-KW"/>
</dbReference>
<dbReference type="GO" id="GO:0004713">
    <property type="term" value="F:protein tyrosine kinase activity"/>
    <property type="evidence" value="ECO:0000318"/>
    <property type="project" value="GO_Central"/>
</dbReference>
<dbReference type="FunFam" id="3.30.200.20:FF:001547">
    <property type="entry name" value="Probable protein kinase DDB_G0277539"/>
    <property type="match status" value="1"/>
</dbReference>
<dbReference type="Gene3D" id="3.30.200.20">
    <property type="entry name" value="Phosphorylase Kinase, domain 1"/>
    <property type="match status" value="1"/>
</dbReference>
<dbReference type="Gene3D" id="1.10.510.10">
    <property type="entry name" value="Transferase(Phosphotransferase) domain 1"/>
    <property type="match status" value="1"/>
</dbReference>
<dbReference type="InterPro" id="IPR050339">
    <property type="entry name" value="CC_SR_Kinase"/>
</dbReference>
<dbReference type="InterPro" id="IPR011009">
    <property type="entry name" value="Kinase-like_dom_sf"/>
</dbReference>
<dbReference type="InterPro" id="IPR000719">
    <property type="entry name" value="Prot_kinase_dom"/>
</dbReference>
<dbReference type="InterPro" id="IPR017441">
    <property type="entry name" value="Protein_kinase_ATP_BS"/>
</dbReference>
<dbReference type="InterPro" id="IPR008271">
    <property type="entry name" value="Ser/Thr_kinase_AS"/>
</dbReference>
<dbReference type="PANTHER" id="PTHR11042">
    <property type="entry name" value="EUKARYOTIC TRANSLATION INITIATION FACTOR 2-ALPHA KINASE EIF2-ALPHA KINASE -RELATED"/>
    <property type="match status" value="1"/>
</dbReference>
<dbReference type="PANTHER" id="PTHR11042:SF185">
    <property type="entry name" value="WEE1-LIKE PROTEIN KINASE"/>
    <property type="match status" value="1"/>
</dbReference>
<dbReference type="Pfam" id="PF00069">
    <property type="entry name" value="Pkinase"/>
    <property type="match status" value="2"/>
</dbReference>
<dbReference type="SMART" id="SM00220">
    <property type="entry name" value="S_TKc"/>
    <property type="match status" value="1"/>
</dbReference>
<dbReference type="SUPFAM" id="SSF56112">
    <property type="entry name" value="Protein kinase-like (PK-like)"/>
    <property type="match status" value="1"/>
</dbReference>
<dbReference type="PROSITE" id="PS00107">
    <property type="entry name" value="PROTEIN_KINASE_ATP"/>
    <property type="match status" value="1"/>
</dbReference>
<dbReference type="PROSITE" id="PS50011">
    <property type="entry name" value="PROTEIN_KINASE_DOM"/>
    <property type="match status" value="1"/>
</dbReference>
<dbReference type="PROSITE" id="PS00108">
    <property type="entry name" value="PROTEIN_KINASE_ST"/>
    <property type="match status" value="1"/>
</dbReference>
<organism>
    <name type="scientific">Dictyostelium discoideum</name>
    <name type="common">Social amoeba</name>
    <dbReference type="NCBI Taxonomy" id="44689"/>
    <lineage>
        <taxon>Eukaryota</taxon>
        <taxon>Amoebozoa</taxon>
        <taxon>Evosea</taxon>
        <taxon>Eumycetozoa</taxon>
        <taxon>Dictyostelia</taxon>
        <taxon>Dictyosteliales</taxon>
        <taxon>Dictyosteliaceae</taxon>
        <taxon>Dictyostelium</taxon>
    </lineage>
</organism>
<proteinExistence type="inferred from homology"/>
<name>Y0004_DICDI</name>
<sequence length="998" mass="114845">MDFPSQSEKKKYITKKRTTLFSYDDDDDDDDFDQNREFIHMSSYEESKDQQNSFNTLLLSELSNCEDQKQQQQQQSSSPTQSDCDSSPTNNNNNNNTNNNIVHHLNNSNSIPISGSNNNNNNNNNNNNNNNNNNNNNNNSHHHHLRKGRRLFHDDNDDQPIYPASASLSSTKTNMFPSSPILYSSPSSQQQQQQQQQQSQSQQTNEFKVPSFTPLSFINNSSTNSMNIRPINNNRIYNNLNNNNNNNNNNNNNINNINNNNINNINNNYNNNNNNEEDQIFSSSLPTSPVSWSANGSMMNGHNINNITGNHSRFLSNGSYNKGNTFPSTEVKRVRPDQRAFNENSFSMSPTPSPPPTPSLKRNNYSSPKFEPVFIRLAEERTNRKRSTSMTSNVNNNNNNNANNNNVNNNNNNNNGPNSISSLIANVNPFTEEGRLQSLNKPCPSFQLVNNNNNNNNASNNNNDNNNNNNNNNNNNNNNDDTCNNNNNNSQNIDNNLITKFSLYKHTFQELDLIGEGSFGHVYKVRHRIDGCLYAIKKTKKPLKGQKDRDIVLREVYGLSAIKDHTNIVRYFNAWEEDSHIFIQMEHCNGGNIYKWVTEHIKQSESNLLLLAKQILTGIVYIHSLGLVHLDIKPENIYIIYKCNQNQIITNNNNTCSINNSSNGSDSYFKSKIKTTENDLDNFITTTNSVNNNNCNNNNNNNVDNQNNNNQNNYLIIDGNKINFNSITFKIGDLGLLNEATNTKIYSEGDSRYLSRELLHDDMSALKKSDIFSLGCTLYELARCKPLPKSGMEWDSIRNGILSFEKEDSIYDDNKNDFSTEFWQLIKSMIHPDPSVRPSAEQLLEHPLIKYGVIEIDDFENEIETLKNLLAEKEKVLIIQKEKQKLRQNQLQQKMQQPNFIELKQQPQQQQEKQQMLHQQKQQYLEQHNNNNDNNNNEFDESEKEYQIQLEQFKIQKMQFQLQQEQLQYQHQHKHQNFFTKQICTASQIEGGIKNMAL</sequence>
<gene>
    <name type="ORF">DDB_G0277539</name>
</gene>
<feature type="chain" id="PRO_0000362036" description="Probable protein kinase DDB_G0277539">
    <location>
        <begin position="1"/>
        <end position="998"/>
    </location>
</feature>
<feature type="domain" description="Protein kinase" evidence="2">
    <location>
        <begin position="508"/>
        <end position="849"/>
    </location>
</feature>
<feature type="region of interest" description="Disordered" evidence="4">
    <location>
        <begin position="1"/>
        <end position="34"/>
    </location>
</feature>
<feature type="region of interest" description="Disordered" evidence="4">
    <location>
        <begin position="65"/>
        <end position="207"/>
    </location>
</feature>
<feature type="region of interest" description="Disordered" evidence="4">
    <location>
        <begin position="265"/>
        <end position="284"/>
    </location>
</feature>
<feature type="region of interest" description="Disordered" evidence="4">
    <location>
        <begin position="316"/>
        <end position="367"/>
    </location>
</feature>
<feature type="region of interest" description="Disordered" evidence="4">
    <location>
        <begin position="380"/>
        <end position="420"/>
    </location>
</feature>
<feature type="region of interest" description="Disordered" evidence="4">
    <location>
        <begin position="435"/>
        <end position="489"/>
    </location>
</feature>
<feature type="compositionally biased region" description="Acidic residues" evidence="4">
    <location>
        <begin position="23"/>
        <end position="32"/>
    </location>
</feature>
<feature type="compositionally biased region" description="Low complexity" evidence="4">
    <location>
        <begin position="70"/>
        <end position="139"/>
    </location>
</feature>
<feature type="compositionally biased region" description="Basic residues" evidence="4">
    <location>
        <begin position="140"/>
        <end position="150"/>
    </location>
</feature>
<feature type="compositionally biased region" description="Polar residues" evidence="4">
    <location>
        <begin position="166"/>
        <end position="177"/>
    </location>
</feature>
<feature type="compositionally biased region" description="Low complexity" evidence="4">
    <location>
        <begin position="184"/>
        <end position="203"/>
    </location>
</feature>
<feature type="compositionally biased region" description="Low complexity" evidence="4">
    <location>
        <begin position="265"/>
        <end position="274"/>
    </location>
</feature>
<feature type="compositionally biased region" description="Polar residues" evidence="4">
    <location>
        <begin position="316"/>
        <end position="328"/>
    </location>
</feature>
<feature type="compositionally biased region" description="Basic and acidic residues" evidence="4">
    <location>
        <begin position="330"/>
        <end position="340"/>
    </location>
</feature>
<feature type="compositionally biased region" description="Low complexity" evidence="4">
    <location>
        <begin position="393"/>
        <end position="415"/>
    </location>
</feature>
<feature type="compositionally biased region" description="Low complexity" evidence="4">
    <location>
        <begin position="450"/>
        <end position="489"/>
    </location>
</feature>
<feature type="active site" description="Proton acceptor" evidence="2 3">
    <location>
        <position position="631"/>
    </location>
</feature>
<feature type="binding site" evidence="2">
    <location>
        <begin position="514"/>
        <end position="522"/>
    </location>
    <ligand>
        <name>ATP</name>
        <dbReference type="ChEBI" id="CHEBI:30616"/>
    </ligand>
</feature>
<feature type="binding site" evidence="2">
    <location>
        <position position="537"/>
    </location>
    <ligand>
        <name>ATP</name>
        <dbReference type="ChEBI" id="CHEBI:30616"/>
    </ligand>
</feature>
<feature type="binding site" evidence="1">
    <location>
        <position position="636"/>
    </location>
    <ligand>
        <name>Mg(2+)</name>
        <dbReference type="ChEBI" id="CHEBI:18420"/>
    </ligand>
</feature>
<feature type="binding site" evidence="1">
    <location>
        <position position="677"/>
    </location>
    <ligand>
        <name>Mg(2+)</name>
        <dbReference type="ChEBI" id="CHEBI:18420"/>
    </ligand>
</feature>
<evidence type="ECO:0000250" key="1"/>
<evidence type="ECO:0000255" key="2">
    <source>
        <dbReference type="PROSITE-ProRule" id="PRU00159"/>
    </source>
</evidence>
<evidence type="ECO:0000255" key="3">
    <source>
        <dbReference type="PROSITE-ProRule" id="PRU10027"/>
    </source>
</evidence>
<evidence type="ECO:0000256" key="4">
    <source>
        <dbReference type="SAM" id="MobiDB-lite"/>
    </source>
</evidence>